<comment type="function">
    <text evidence="1">Converts proline to delta-1-pyrroline-5-carboxylate.</text>
</comment>
<comment type="catalytic activity">
    <reaction>
        <text>L-proline + a quinone = (S)-1-pyrroline-5-carboxylate + a quinol + H(+)</text>
        <dbReference type="Rhea" id="RHEA:23784"/>
        <dbReference type="ChEBI" id="CHEBI:15378"/>
        <dbReference type="ChEBI" id="CHEBI:17388"/>
        <dbReference type="ChEBI" id="CHEBI:24646"/>
        <dbReference type="ChEBI" id="CHEBI:60039"/>
        <dbReference type="ChEBI" id="CHEBI:132124"/>
        <dbReference type="EC" id="1.5.5.2"/>
    </reaction>
</comment>
<comment type="cofactor">
    <cofactor>
        <name>FAD</name>
        <dbReference type="ChEBI" id="CHEBI:57692"/>
    </cofactor>
</comment>
<comment type="subcellular location">
    <subcellularLocation>
        <location>Mitochondrion</location>
    </subcellularLocation>
</comment>
<comment type="similarity">
    <text evidence="3">Belongs to the proline oxidase family.</text>
</comment>
<reference key="1">
    <citation type="journal article" date="2002" name="Nature">
        <title>The genome sequence of Schizosaccharomyces pombe.</title>
        <authorList>
            <person name="Wood V."/>
            <person name="Gwilliam R."/>
            <person name="Rajandream M.A."/>
            <person name="Lyne M.H."/>
            <person name="Lyne R."/>
            <person name="Stewart A."/>
            <person name="Sgouros J.G."/>
            <person name="Peat N."/>
            <person name="Hayles J."/>
            <person name="Baker S.G."/>
            <person name="Basham D."/>
            <person name="Bowman S."/>
            <person name="Brooks K."/>
            <person name="Brown D."/>
            <person name="Brown S."/>
            <person name="Chillingworth T."/>
            <person name="Churcher C.M."/>
            <person name="Collins M."/>
            <person name="Connor R."/>
            <person name="Cronin A."/>
            <person name="Davis P."/>
            <person name="Feltwell T."/>
            <person name="Fraser A."/>
            <person name="Gentles S."/>
            <person name="Goble A."/>
            <person name="Hamlin N."/>
            <person name="Harris D.E."/>
            <person name="Hidalgo J."/>
            <person name="Hodgson G."/>
            <person name="Holroyd S."/>
            <person name="Hornsby T."/>
            <person name="Howarth S."/>
            <person name="Huckle E.J."/>
            <person name="Hunt S."/>
            <person name="Jagels K."/>
            <person name="James K.D."/>
            <person name="Jones L."/>
            <person name="Jones M."/>
            <person name="Leather S."/>
            <person name="McDonald S."/>
            <person name="McLean J."/>
            <person name="Mooney P."/>
            <person name="Moule S."/>
            <person name="Mungall K.L."/>
            <person name="Murphy L.D."/>
            <person name="Niblett D."/>
            <person name="Odell C."/>
            <person name="Oliver K."/>
            <person name="O'Neil S."/>
            <person name="Pearson D."/>
            <person name="Quail M.A."/>
            <person name="Rabbinowitsch E."/>
            <person name="Rutherford K.M."/>
            <person name="Rutter S."/>
            <person name="Saunders D."/>
            <person name="Seeger K."/>
            <person name="Sharp S."/>
            <person name="Skelton J."/>
            <person name="Simmonds M.N."/>
            <person name="Squares R."/>
            <person name="Squares S."/>
            <person name="Stevens K."/>
            <person name="Taylor K."/>
            <person name="Taylor R.G."/>
            <person name="Tivey A."/>
            <person name="Walsh S.V."/>
            <person name="Warren T."/>
            <person name="Whitehead S."/>
            <person name="Woodward J.R."/>
            <person name="Volckaert G."/>
            <person name="Aert R."/>
            <person name="Robben J."/>
            <person name="Grymonprez B."/>
            <person name="Weltjens I."/>
            <person name="Vanstreels E."/>
            <person name="Rieger M."/>
            <person name="Schaefer M."/>
            <person name="Mueller-Auer S."/>
            <person name="Gabel C."/>
            <person name="Fuchs M."/>
            <person name="Duesterhoeft A."/>
            <person name="Fritzc C."/>
            <person name="Holzer E."/>
            <person name="Moestl D."/>
            <person name="Hilbert H."/>
            <person name="Borzym K."/>
            <person name="Langer I."/>
            <person name="Beck A."/>
            <person name="Lehrach H."/>
            <person name="Reinhardt R."/>
            <person name="Pohl T.M."/>
            <person name="Eger P."/>
            <person name="Zimmermann W."/>
            <person name="Wedler H."/>
            <person name="Wambutt R."/>
            <person name="Purnelle B."/>
            <person name="Goffeau A."/>
            <person name="Cadieu E."/>
            <person name="Dreano S."/>
            <person name="Gloux S."/>
            <person name="Lelaure V."/>
            <person name="Mottier S."/>
            <person name="Galibert F."/>
            <person name="Aves S.J."/>
            <person name="Xiang Z."/>
            <person name="Hunt C."/>
            <person name="Moore K."/>
            <person name="Hurst S.M."/>
            <person name="Lucas M."/>
            <person name="Rochet M."/>
            <person name="Gaillardin C."/>
            <person name="Tallada V.A."/>
            <person name="Garzon A."/>
            <person name="Thode G."/>
            <person name="Daga R.R."/>
            <person name="Cruzado L."/>
            <person name="Jimenez J."/>
            <person name="Sanchez M."/>
            <person name="del Rey F."/>
            <person name="Benito J."/>
            <person name="Dominguez A."/>
            <person name="Revuelta J.L."/>
            <person name="Moreno S."/>
            <person name="Armstrong J."/>
            <person name="Forsburg S.L."/>
            <person name="Cerutti L."/>
            <person name="Lowe T."/>
            <person name="McCombie W.R."/>
            <person name="Paulsen I."/>
            <person name="Potashkin J."/>
            <person name="Shpakovski G.V."/>
            <person name="Ussery D."/>
            <person name="Barrell B.G."/>
            <person name="Nurse P."/>
        </authorList>
    </citation>
    <scope>NUCLEOTIDE SEQUENCE [LARGE SCALE GENOMIC DNA]</scope>
    <source>
        <strain>972 / ATCC 24843</strain>
    </source>
</reference>
<dbReference type="EC" id="1.5.5.2"/>
<dbReference type="EMBL" id="CU329672">
    <property type="protein sequence ID" value="CAA19353.1"/>
    <property type="molecule type" value="Genomic_DNA"/>
</dbReference>
<dbReference type="PIR" id="T41549">
    <property type="entry name" value="T41549"/>
</dbReference>
<dbReference type="SMR" id="O74524"/>
<dbReference type="BioGRID" id="276015">
    <property type="interactions" value="29"/>
</dbReference>
<dbReference type="FunCoup" id="O74524">
    <property type="interactions" value="338"/>
</dbReference>
<dbReference type="STRING" id="284812.O74524"/>
<dbReference type="iPTMnet" id="O74524"/>
<dbReference type="PaxDb" id="4896-SPCC70.03c.1"/>
<dbReference type="EnsemblFungi" id="SPCC70.03c.1">
    <property type="protein sequence ID" value="SPCC70.03c.1:pep"/>
    <property type="gene ID" value="SPCC70.03c"/>
</dbReference>
<dbReference type="KEGG" id="spo:2539452"/>
<dbReference type="PomBase" id="SPCC70.03c"/>
<dbReference type="VEuPathDB" id="FungiDB:SPCC70.03c"/>
<dbReference type="eggNOG" id="KOG0186">
    <property type="taxonomic scope" value="Eukaryota"/>
</dbReference>
<dbReference type="HOGENOM" id="CLU_018202_0_1_1"/>
<dbReference type="InParanoid" id="O74524"/>
<dbReference type="OMA" id="WFTRKKG"/>
<dbReference type="PhylomeDB" id="O74524"/>
<dbReference type="Reactome" id="R-SPO-389661">
    <property type="pathway name" value="Glyoxylate metabolism and glycine degradation"/>
</dbReference>
<dbReference type="Reactome" id="R-SPO-70688">
    <property type="pathway name" value="Proline catabolism"/>
</dbReference>
<dbReference type="PRO" id="PR:O74524"/>
<dbReference type="Proteomes" id="UP000002485">
    <property type="component" value="Chromosome III"/>
</dbReference>
<dbReference type="GO" id="GO:0005759">
    <property type="term" value="C:mitochondrial matrix"/>
    <property type="evidence" value="ECO:0000250"/>
    <property type="project" value="PomBase"/>
</dbReference>
<dbReference type="GO" id="GO:0005739">
    <property type="term" value="C:mitochondrion"/>
    <property type="evidence" value="ECO:0000318"/>
    <property type="project" value="GO_Central"/>
</dbReference>
<dbReference type="GO" id="GO:0071949">
    <property type="term" value="F:FAD binding"/>
    <property type="evidence" value="ECO:0000318"/>
    <property type="project" value="GO_Central"/>
</dbReference>
<dbReference type="GO" id="GO:0004657">
    <property type="term" value="F:proline dehydrogenase activity"/>
    <property type="evidence" value="ECO:0000318"/>
    <property type="project" value="GO_Central"/>
</dbReference>
<dbReference type="GO" id="GO:0010133">
    <property type="term" value="P:proline catabolic process to glutamate"/>
    <property type="evidence" value="ECO:0000318"/>
    <property type="project" value="GO_Central"/>
</dbReference>
<dbReference type="Gene3D" id="3.20.20.220">
    <property type="match status" value="1"/>
</dbReference>
<dbReference type="InterPro" id="IPR029041">
    <property type="entry name" value="FAD-linked_oxidoreductase-like"/>
</dbReference>
<dbReference type="InterPro" id="IPR002872">
    <property type="entry name" value="Proline_DH_dom"/>
</dbReference>
<dbReference type="InterPro" id="IPR015659">
    <property type="entry name" value="Proline_oxidase"/>
</dbReference>
<dbReference type="PANTHER" id="PTHR13914:SF0">
    <property type="entry name" value="PROLINE DEHYDROGENASE 1, MITOCHONDRIAL"/>
    <property type="match status" value="1"/>
</dbReference>
<dbReference type="PANTHER" id="PTHR13914">
    <property type="entry name" value="PROLINE OXIDASE"/>
    <property type="match status" value="1"/>
</dbReference>
<dbReference type="Pfam" id="PF01619">
    <property type="entry name" value="Pro_dh"/>
    <property type="match status" value="1"/>
</dbReference>
<dbReference type="SUPFAM" id="SSF51730">
    <property type="entry name" value="FAD-linked oxidoreductase"/>
    <property type="match status" value="1"/>
</dbReference>
<keyword id="KW-0274">FAD</keyword>
<keyword id="KW-0285">Flavoprotein</keyword>
<keyword id="KW-0496">Mitochondrion</keyword>
<keyword id="KW-0560">Oxidoreductase</keyword>
<keyword id="KW-0642">Proline metabolism</keyword>
<keyword id="KW-1185">Reference proteome</keyword>
<keyword id="KW-0809">Transit peptide</keyword>
<evidence type="ECO:0000250" key="1"/>
<evidence type="ECO:0000255" key="2"/>
<evidence type="ECO:0000305" key="3"/>
<accession>O74524</accession>
<sequence length="492" mass="55813">MRAFRLASGVLRNRKVILGIGAGSLITAGNIKIRNDSKFDAFFAKGFPDELQHRSLFSVLRSAFVYEICSRAWLVKLSLGAMSLCDVFHLSFLYNPFCRYTFYKHFCGGETPQAVMATMDTLQAAGITSCLNYSREVDLDGDMDVNKIASQGVVPPQVPVPSEKNQKVLRQIADKAFESNMHIIDMATYKPGTVCAVKLTPFINPLVLQRYNSILNQYPVESACNYLEHLKSPELSTYEVSELKKFWEYADKLCQFAKEKQIPLFIDAEQTYFQDCMHAVTVDLMRKYNKEVAIVHNTYQLYLKKSRKIMDDHIKKCVAEGWLMGAKLVRGAYLNSEPRFLIHDTKAETDKDFDSAVEAIIAAAAKFAPGDPASASDPIASRKGKWGIMVASHNKKTMFESVNLAETKKVDFTKTSFYLAQLLGMADDITYALAYSQRNQQPNFCIVKYVSCGPISEVLPYLVRRARENIDALDRCKEERAYYRQALRRRIF</sequence>
<gene>
    <name type="ORF">SPCC70.03c</name>
</gene>
<name>PROD_SCHPO</name>
<protein>
    <recommendedName>
        <fullName>Probable proline dehydrogenase, mitochondrial</fullName>
        <ecNumber>1.5.5.2</ecNumber>
    </recommendedName>
    <alternativeName>
        <fullName>Probable proline oxidase</fullName>
    </alternativeName>
</protein>
<feature type="transit peptide" description="Mitochondrion" evidence="2">
    <location>
        <begin position="1"/>
        <end status="unknown"/>
    </location>
</feature>
<feature type="chain" id="PRO_0000025805" description="Probable proline dehydrogenase, mitochondrial">
    <location>
        <begin status="unknown"/>
        <end position="492"/>
    </location>
</feature>
<organism>
    <name type="scientific">Schizosaccharomyces pombe (strain 972 / ATCC 24843)</name>
    <name type="common">Fission yeast</name>
    <dbReference type="NCBI Taxonomy" id="284812"/>
    <lineage>
        <taxon>Eukaryota</taxon>
        <taxon>Fungi</taxon>
        <taxon>Dikarya</taxon>
        <taxon>Ascomycota</taxon>
        <taxon>Taphrinomycotina</taxon>
        <taxon>Schizosaccharomycetes</taxon>
        <taxon>Schizosaccharomycetales</taxon>
        <taxon>Schizosaccharomycetaceae</taxon>
        <taxon>Schizosaccharomyces</taxon>
    </lineage>
</organism>
<proteinExistence type="inferred from homology"/>